<dbReference type="EMBL" id="CU329670">
    <property type="protein sequence ID" value="CAB11219.1"/>
    <property type="molecule type" value="Genomic_DNA"/>
</dbReference>
<dbReference type="PIR" id="T37876">
    <property type="entry name" value="T37876"/>
</dbReference>
<dbReference type="RefSeq" id="NP_593580.1">
    <property type="nucleotide sequence ID" value="NM_001019012.2"/>
</dbReference>
<dbReference type="SMR" id="O13807"/>
<dbReference type="BioGRID" id="278682">
    <property type="interactions" value="279"/>
</dbReference>
<dbReference type="FunCoup" id="O13807">
    <property type="interactions" value="880"/>
</dbReference>
<dbReference type="IntAct" id="O13807">
    <property type="interactions" value="2"/>
</dbReference>
<dbReference type="STRING" id="284812.O13807"/>
<dbReference type="PaxDb" id="4896-SPAC17H9.10c.1"/>
<dbReference type="EnsemblFungi" id="SPAC17H9.10c.1">
    <property type="protein sequence ID" value="SPAC17H9.10c.1:pep"/>
    <property type="gene ID" value="SPAC17H9.10c"/>
</dbReference>
<dbReference type="GeneID" id="2542207"/>
<dbReference type="KEGG" id="spo:2542207"/>
<dbReference type="PomBase" id="SPAC17H9.10c">
    <property type="gene designation" value="ddb1"/>
</dbReference>
<dbReference type="VEuPathDB" id="FungiDB:SPAC17H9.10c"/>
<dbReference type="eggNOG" id="KOG1897">
    <property type="taxonomic scope" value="Eukaryota"/>
</dbReference>
<dbReference type="HOGENOM" id="CLU_002893_0_1_1"/>
<dbReference type="InParanoid" id="O13807"/>
<dbReference type="OMA" id="HQDFLMR"/>
<dbReference type="PhylomeDB" id="O13807"/>
<dbReference type="Reactome" id="R-SPO-110314">
    <property type="pathway name" value="Recognition of DNA damage by PCNA-containing replication complex"/>
</dbReference>
<dbReference type="Reactome" id="R-SPO-5696395">
    <property type="pathway name" value="Formation of Incision Complex in GG-NER"/>
</dbReference>
<dbReference type="Reactome" id="R-SPO-5696400">
    <property type="pathway name" value="Dual Incision in GG-NER"/>
</dbReference>
<dbReference type="Reactome" id="R-SPO-6781823">
    <property type="pathway name" value="Formation of TC-NER Pre-Incision Complex"/>
</dbReference>
<dbReference type="Reactome" id="R-SPO-6782135">
    <property type="pathway name" value="Dual incision in TC-NER"/>
</dbReference>
<dbReference type="Reactome" id="R-SPO-6782210">
    <property type="pathway name" value="Gap-filling DNA repair synthesis and ligation in TC-NER"/>
</dbReference>
<dbReference type="Reactome" id="R-SPO-8951664">
    <property type="pathway name" value="Neddylation"/>
</dbReference>
<dbReference type="UniPathway" id="UPA00143"/>
<dbReference type="PRO" id="PR:O13807"/>
<dbReference type="Proteomes" id="UP000002485">
    <property type="component" value="Chromosome I"/>
</dbReference>
<dbReference type="GO" id="GO:0080008">
    <property type="term" value="C:Cul4-RING E3 ubiquitin ligase complex"/>
    <property type="evidence" value="ECO:0000269"/>
    <property type="project" value="PomBase"/>
</dbReference>
<dbReference type="GO" id="GO:0005829">
    <property type="term" value="C:cytosol"/>
    <property type="evidence" value="ECO:0007005"/>
    <property type="project" value="PomBase"/>
</dbReference>
<dbReference type="GO" id="GO:0070912">
    <property type="term" value="C:Ddb1-Ckn1 complex"/>
    <property type="evidence" value="ECO:0000314"/>
    <property type="project" value="PomBase"/>
</dbReference>
<dbReference type="GO" id="GO:0070913">
    <property type="term" value="C:Ddb1-Wdr21 complex"/>
    <property type="evidence" value="ECO:0000314"/>
    <property type="project" value="PomBase"/>
</dbReference>
<dbReference type="GO" id="GO:0005730">
    <property type="term" value="C:nucleolus"/>
    <property type="evidence" value="ECO:0000314"/>
    <property type="project" value="PomBase"/>
</dbReference>
<dbReference type="GO" id="GO:0005634">
    <property type="term" value="C:nucleus"/>
    <property type="evidence" value="ECO:0000314"/>
    <property type="project" value="PomBase"/>
</dbReference>
<dbReference type="GO" id="GO:0035861">
    <property type="term" value="C:site of double-strand break"/>
    <property type="evidence" value="ECO:0000314"/>
    <property type="project" value="PomBase"/>
</dbReference>
<dbReference type="GO" id="GO:0003677">
    <property type="term" value="F:DNA binding"/>
    <property type="evidence" value="ECO:0007669"/>
    <property type="project" value="UniProtKB-KW"/>
</dbReference>
<dbReference type="GO" id="GO:0006281">
    <property type="term" value="P:DNA repair"/>
    <property type="evidence" value="ECO:0000318"/>
    <property type="project" value="GO_Central"/>
</dbReference>
<dbReference type="GO" id="GO:0000724">
    <property type="term" value="P:double-strand break repair via homologous recombination"/>
    <property type="evidence" value="ECO:0000269"/>
    <property type="project" value="PomBase"/>
</dbReference>
<dbReference type="GO" id="GO:0033621">
    <property type="term" value="P:nuclear mRNA surveillance of meiosis-specific transcripts"/>
    <property type="evidence" value="ECO:0000316"/>
    <property type="project" value="PomBase"/>
</dbReference>
<dbReference type="GO" id="GO:0043161">
    <property type="term" value="P:proteasome-mediated ubiquitin-dependent protein catabolic process"/>
    <property type="evidence" value="ECO:0000316"/>
    <property type="project" value="PomBase"/>
</dbReference>
<dbReference type="GO" id="GO:0016567">
    <property type="term" value="P:protein ubiquitination"/>
    <property type="evidence" value="ECO:0007669"/>
    <property type="project" value="UniProtKB-UniPathway"/>
</dbReference>
<dbReference type="GO" id="GO:0006283">
    <property type="term" value="P:transcription-coupled nucleotide-excision repair"/>
    <property type="evidence" value="ECO:0000315"/>
    <property type="project" value="PomBase"/>
</dbReference>
<dbReference type="FunFam" id="2.130.10.10:FF:003658">
    <property type="entry name" value="Chromatin modification-related protein rik1"/>
    <property type="match status" value="1"/>
</dbReference>
<dbReference type="Gene3D" id="1.10.150.910">
    <property type="match status" value="1"/>
</dbReference>
<dbReference type="Gene3D" id="2.130.10.10">
    <property type="entry name" value="YVTN repeat-like/Quinoprotein amine dehydrogenase"/>
    <property type="match status" value="3"/>
</dbReference>
<dbReference type="InterPro" id="IPR018846">
    <property type="entry name" value="Beta-prop_RSE1/DDB1/CPSF1_1st"/>
</dbReference>
<dbReference type="InterPro" id="IPR004871">
    <property type="entry name" value="Cleavage/polyA-sp_fac_asu_C"/>
</dbReference>
<dbReference type="InterPro" id="IPR011047">
    <property type="entry name" value="Quinoprotein_ADH-like_sf"/>
</dbReference>
<dbReference type="InterPro" id="IPR050358">
    <property type="entry name" value="RSE1/DDB1/CFT1/CPSF1"/>
</dbReference>
<dbReference type="InterPro" id="IPR015943">
    <property type="entry name" value="WD40/YVTN_repeat-like_dom_sf"/>
</dbReference>
<dbReference type="PANTHER" id="PTHR10644">
    <property type="entry name" value="DNA REPAIR/RNA PROCESSING CPSF FAMILY"/>
    <property type="match status" value="1"/>
</dbReference>
<dbReference type="Pfam" id="PF10433">
    <property type="entry name" value="Beta-prop_RSE1_1st"/>
    <property type="match status" value="1"/>
</dbReference>
<dbReference type="Pfam" id="PF23726">
    <property type="entry name" value="Beta-prop_RSE1_2nd"/>
    <property type="match status" value="1"/>
</dbReference>
<dbReference type="Pfam" id="PF03178">
    <property type="entry name" value="CPSF_A"/>
    <property type="match status" value="1"/>
</dbReference>
<dbReference type="SUPFAM" id="SSF50998">
    <property type="entry name" value="Quinoprotein alcohol dehydrogenase-like"/>
    <property type="match status" value="1"/>
</dbReference>
<keyword id="KW-0131">Cell cycle</keyword>
<keyword id="KW-0227">DNA damage</keyword>
<keyword id="KW-0234">DNA repair</keyword>
<keyword id="KW-0238">DNA-binding</keyword>
<keyword id="KW-0539">Nucleus</keyword>
<keyword id="KW-1185">Reference proteome</keyword>
<keyword id="KW-0833">Ubl conjugation pathway</keyword>
<gene>
    <name type="primary">ddb1</name>
    <name type="ORF">SPAC17H9.10c</name>
</gene>
<comment type="function">
    <text evidence="1 4 5 6 7 8 9 10">Component of an E3 ubiquitin-protein ligase that includes cul4 (By similarity). Required for ubiquitination and the subsequent degradation of the DNA replication licensing factor cdt1 and of the ribonucleotide reductase inhibitor spd1. Also required for transcription-coupled nucleotide excision repair.</text>
</comment>
<comment type="pathway">
    <text>Protein modification; protein ubiquitination.</text>
</comment>
<comment type="subunit">
    <text evidence="3 7 10">Interacts with csn1, csn2, cdt2, ckn1, iqw1 and wdr21.</text>
</comment>
<comment type="interaction">
    <interactant intactId="EBI-3647902">
        <id>O13807</id>
    </interactant>
    <interactant intactId="EBI-3505190">
        <id>Q10990</id>
        <label>cdt2</label>
    </interactant>
    <organismsDiffer>false</organismsDiffer>
    <experiments>4</experiments>
</comment>
<comment type="subcellular location">
    <subcellularLocation>
        <location evidence="2">Nucleus</location>
    </subcellularLocation>
</comment>
<comment type="similarity">
    <text evidence="11">Belongs to the DDB1 family.</text>
</comment>
<sequence>MTYVTYLHKPSSIRNAVFCKFVNASSWNVIVAKVNCLEVYSYENNRLCLITSANIFAKIVNVKAFKPVSSPTDHIIVATDSFRYFTLFWDANDNTVSNGIKIQDCSERSLRESQSGPLLLVDPFQRVICLHVYQGLLTIIPIFKSKKRFMTSHNNPSLHDNFSVRIQELNVVDIAMLYNSSRPSLAVLYKDSKSIVHLSTYKINVREQEIDEDDVVCHDIEEGKLIPSENGGVFVFGEMYVYYISKDIQVSKLLLTYPITAFSPSISNDPETGLDSSIYIVADESGMLYKFKALFTDETVSMELEKLGESSIASCLIALPDNHLFVGSHFNNSVLLQLPSITKNNHKLEILQNFVNIAPISDFIIDDDQTGSSIITCSGAYKDGTLRIIRNSINIENVALIEMEGIKDFFSVSFRANYDNYIFLSLICETRAIIVSPEGVFSANHDLSCEESTIFVSTIYGNSQILQITTKEIRLFDGKKLHSWISPMSITCGSSFADNVCVAVAGGLILFFEGITEVGRYQCDTEVSSLCFTEENVVYVGLWSADIIMLTYCQDGISLTHSLKLTDIPRSIVYSQKYGDDGGTLYVSTNNGYVLMFNFQNGQVIEHSLRRNQLGVAPIILKHFDSKEKNAIFALGEKPQLMYYESDKLVITPLSCTEMLNISSYVNPSLGVNMLYCTNSYISLAKMSEIRSLNVQTVSVKGFPRRICSNSLFYFVLCMQLEESIGTQEQRLLSFLRVYEKNTLSEIAHHKFNEYEMVESIILMNDDKRVVVGTGFNFPDQDAPDSGRLMVFEMTSDNNIEMQAEHKVQGSVNTLVLYKHLIVAGINASVCIFEYEHGTMHVRNSIRTPTYTIDISVNQDEIIAADLMKSITVLQFIDDQLIEVARDYHPLWATSVEILSERKYFVTEADGNAVILLRDNVSPQLSDRKKLRWYKKFYLGELINKTRHCTFIEPQDKSLVTPQLLCATVDGSLMIVGDAGMSNTPLLLQLQDNIRKVIPSFGGLSHKEWKEYRGENETSPSDLIDGSLIESILGLREPILNEIVNGGHEGTKLDISVQDLKSIIENLEKLHP</sequence>
<organism>
    <name type="scientific">Schizosaccharomyces pombe (strain 972 / ATCC 24843)</name>
    <name type="common">Fission yeast</name>
    <dbReference type="NCBI Taxonomy" id="284812"/>
    <lineage>
        <taxon>Eukaryota</taxon>
        <taxon>Fungi</taxon>
        <taxon>Dikarya</taxon>
        <taxon>Ascomycota</taxon>
        <taxon>Taphrinomycotina</taxon>
        <taxon>Schizosaccharomycetes</taxon>
        <taxon>Schizosaccharomycetales</taxon>
        <taxon>Schizosaccharomycetaceae</taxon>
        <taxon>Schizosaccharomyces</taxon>
    </lineage>
</organism>
<accession>O13807</accession>
<protein>
    <recommendedName>
        <fullName>DNA damage-binding protein 1</fullName>
    </recommendedName>
    <alternativeName>
        <fullName>Damage-specific DNA-binding protein 1</fullName>
    </alternativeName>
</protein>
<evidence type="ECO:0000250" key="1"/>
<evidence type="ECO:0000269" key="2">
    <source>
    </source>
</evidence>
<evidence type="ECO:0000269" key="3">
    <source>
    </source>
</evidence>
<evidence type="ECO:0000269" key="4">
    <source>
    </source>
</evidence>
<evidence type="ECO:0000269" key="5">
    <source>
    </source>
</evidence>
<evidence type="ECO:0000269" key="6">
    <source>
    </source>
</evidence>
<evidence type="ECO:0000269" key="7">
    <source>
    </source>
</evidence>
<evidence type="ECO:0000269" key="8">
    <source>
    </source>
</evidence>
<evidence type="ECO:0000269" key="9">
    <source>
    </source>
</evidence>
<evidence type="ECO:0000269" key="10">
    <source>
    </source>
</evidence>
<evidence type="ECO:0000305" key="11"/>
<reference key="1">
    <citation type="journal article" date="2002" name="Nature">
        <title>The genome sequence of Schizosaccharomyces pombe.</title>
        <authorList>
            <person name="Wood V."/>
            <person name="Gwilliam R."/>
            <person name="Rajandream M.A."/>
            <person name="Lyne M.H."/>
            <person name="Lyne R."/>
            <person name="Stewart A."/>
            <person name="Sgouros J.G."/>
            <person name="Peat N."/>
            <person name="Hayles J."/>
            <person name="Baker S.G."/>
            <person name="Basham D."/>
            <person name="Bowman S."/>
            <person name="Brooks K."/>
            <person name="Brown D."/>
            <person name="Brown S."/>
            <person name="Chillingworth T."/>
            <person name="Churcher C.M."/>
            <person name="Collins M."/>
            <person name="Connor R."/>
            <person name="Cronin A."/>
            <person name="Davis P."/>
            <person name="Feltwell T."/>
            <person name="Fraser A."/>
            <person name="Gentles S."/>
            <person name="Goble A."/>
            <person name="Hamlin N."/>
            <person name="Harris D.E."/>
            <person name="Hidalgo J."/>
            <person name="Hodgson G."/>
            <person name="Holroyd S."/>
            <person name="Hornsby T."/>
            <person name="Howarth S."/>
            <person name="Huckle E.J."/>
            <person name="Hunt S."/>
            <person name="Jagels K."/>
            <person name="James K.D."/>
            <person name="Jones L."/>
            <person name="Jones M."/>
            <person name="Leather S."/>
            <person name="McDonald S."/>
            <person name="McLean J."/>
            <person name="Mooney P."/>
            <person name="Moule S."/>
            <person name="Mungall K.L."/>
            <person name="Murphy L.D."/>
            <person name="Niblett D."/>
            <person name="Odell C."/>
            <person name="Oliver K."/>
            <person name="O'Neil S."/>
            <person name="Pearson D."/>
            <person name="Quail M.A."/>
            <person name="Rabbinowitsch E."/>
            <person name="Rutherford K.M."/>
            <person name="Rutter S."/>
            <person name="Saunders D."/>
            <person name="Seeger K."/>
            <person name="Sharp S."/>
            <person name="Skelton J."/>
            <person name="Simmonds M.N."/>
            <person name="Squares R."/>
            <person name="Squares S."/>
            <person name="Stevens K."/>
            <person name="Taylor K."/>
            <person name="Taylor R.G."/>
            <person name="Tivey A."/>
            <person name="Walsh S.V."/>
            <person name="Warren T."/>
            <person name="Whitehead S."/>
            <person name="Woodward J.R."/>
            <person name="Volckaert G."/>
            <person name="Aert R."/>
            <person name="Robben J."/>
            <person name="Grymonprez B."/>
            <person name="Weltjens I."/>
            <person name="Vanstreels E."/>
            <person name="Rieger M."/>
            <person name="Schaefer M."/>
            <person name="Mueller-Auer S."/>
            <person name="Gabel C."/>
            <person name="Fuchs M."/>
            <person name="Duesterhoeft A."/>
            <person name="Fritzc C."/>
            <person name="Holzer E."/>
            <person name="Moestl D."/>
            <person name="Hilbert H."/>
            <person name="Borzym K."/>
            <person name="Langer I."/>
            <person name="Beck A."/>
            <person name="Lehrach H."/>
            <person name="Reinhardt R."/>
            <person name="Pohl T.M."/>
            <person name="Eger P."/>
            <person name="Zimmermann W."/>
            <person name="Wedler H."/>
            <person name="Wambutt R."/>
            <person name="Purnelle B."/>
            <person name="Goffeau A."/>
            <person name="Cadieu E."/>
            <person name="Dreano S."/>
            <person name="Gloux S."/>
            <person name="Lelaure V."/>
            <person name="Mottier S."/>
            <person name="Galibert F."/>
            <person name="Aves S.J."/>
            <person name="Xiang Z."/>
            <person name="Hunt C."/>
            <person name="Moore K."/>
            <person name="Hurst S.M."/>
            <person name="Lucas M."/>
            <person name="Rochet M."/>
            <person name="Gaillardin C."/>
            <person name="Tallada V.A."/>
            <person name="Garzon A."/>
            <person name="Thode G."/>
            <person name="Daga R.R."/>
            <person name="Cruzado L."/>
            <person name="Jimenez J."/>
            <person name="Sanchez M."/>
            <person name="del Rey F."/>
            <person name="Benito J."/>
            <person name="Dominguez A."/>
            <person name="Revuelta J.L."/>
            <person name="Moreno S."/>
            <person name="Armstrong J."/>
            <person name="Forsburg S.L."/>
            <person name="Cerutti L."/>
            <person name="Lowe T."/>
            <person name="McCombie W.R."/>
            <person name="Paulsen I."/>
            <person name="Potashkin J."/>
            <person name="Shpakovski G.V."/>
            <person name="Ussery D."/>
            <person name="Barrell B.G."/>
            <person name="Nurse P."/>
        </authorList>
    </citation>
    <scope>NUCLEOTIDE SEQUENCE [LARGE SCALE GENOMIC DNA]</scope>
    <source>
        <strain>972 / ATCC 24843</strain>
    </source>
</reference>
<reference key="2">
    <citation type="journal article" date="2002" name="J. Biol. Chem.">
        <title>Characterization of a Schizosaccharomyces pombe strain deleted for a sequence homologue of the human damaged DNA binding 1 (DDB1) gene.</title>
        <authorList>
            <person name="Zolezzi F."/>
            <person name="Fuss J."/>
            <person name="Uzawa S."/>
            <person name="Linn S."/>
        </authorList>
    </citation>
    <scope>SUBCELLULAR LOCATION</scope>
</reference>
<reference key="3">
    <citation type="journal article" date="2003" name="Genes Dev.">
        <title>Cop9/signalosome subunits and Pcu4 regulate ribonucleotide reductase by both checkpoint-dependent and -independent mechanisms.</title>
        <authorList>
            <person name="Liu C."/>
            <person name="Powell K.A."/>
            <person name="Mundt K."/>
            <person name="Wu L."/>
            <person name="Carr A.M."/>
            <person name="Caspari T."/>
        </authorList>
    </citation>
    <scope>IDENTIFICATION BY MASS SPECTROMETRY</scope>
    <scope>INTERACTION WITH CSN2</scope>
</reference>
<reference key="4">
    <citation type="journal article" date="2003" name="J. Biol. Chem.">
        <title>Schizosaccharomyces pombe Ddb1 is functionally linked to the replication checkpoint pathway.</title>
        <authorList>
            <person name="Bondar T."/>
            <person name="Mirkin E.V."/>
            <person name="Ucker D.S."/>
            <person name="Walden W.E."/>
            <person name="Mirkin S.M."/>
            <person name="Raychaudhuri P."/>
        </authorList>
    </citation>
    <scope>FUNCTION</scope>
</reference>
<reference key="5">
    <citation type="journal article" date="2004" name="J. Biol. Chem.">
        <title>Ddb1 is required for the proteolysis of the Schizosaccharomyces pombe replication inhibitor Spd1 during S phase and after DNA damage.</title>
        <authorList>
            <person name="Bondar T."/>
            <person name="Ponomarev A."/>
            <person name="Raychaudhuri P."/>
        </authorList>
    </citation>
    <scope>FUNCTION</scope>
</reference>
<reference key="6">
    <citation type="journal article" date="2005" name="EMBO J.">
        <title>Transactivation of Schizosaccharomyces pombe cdt2+ stimulates a Pcu4-Ddb1-CSN ubiquitin ligase.</title>
        <authorList>
            <person name="Liu C."/>
            <person name="Poitelea M."/>
            <person name="Watson A."/>
            <person name="Yoshida S.H."/>
            <person name="Shimoda C."/>
            <person name="Holmberg C."/>
            <person name="Nielsen O."/>
            <person name="Carr A.M."/>
        </authorList>
    </citation>
    <scope>FUNCTION</scope>
    <scope>IDENTIFICATION BY MASS SPECTROMETRY</scope>
    <scope>INTERACTION WITH CSN1 AND CDT2</scope>
</reference>
<reference key="7">
    <citation type="journal article" date="2005" name="Genes Dev.">
        <title>Ddb1 controls genome stability and meiosis in fission yeast.</title>
        <authorList>
            <person name="Holmberg C."/>
            <person name="Fleck O."/>
            <person name="Hansen H.A."/>
            <person name="Liu C."/>
            <person name="Slaaby R."/>
            <person name="Carr A.M."/>
            <person name="Nielsen O."/>
        </authorList>
    </citation>
    <scope>FUNCTION</scope>
</reference>
<reference key="8">
    <citation type="journal article" date="2006" name="EMBO Rep.">
        <title>DNA damage induces Cdt1 proteolysis in fission yeast through a pathway dependent on Cdt2 and Ddb1.</title>
        <authorList>
            <person name="Ralph E."/>
            <person name="Boye E."/>
            <person name="Kearsey S.E."/>
        </authorList>
    </citation>
    <scope>FUNCTION</scope>
</reference>
<reference key="9">
    <citation type="journal article" date="2006" name="J. Biol. Chem.">
        <title>An evolutionarily conserved function of proliferating cell nuclear antigen for Cdt1 degradation by the Cul4-Ddb1 ubiquitin ligase in response to DNA damage.</title>
        <authorList>
            <person name="Hu J."/>
            <person name="Xiong Y."/>
        </authorList>
    </citation>
    <scope>FUNCTION</scope>
</reference>
<reference key="10">
    <citation type="journal article" date="2008" name="Mol. Cell. Biol.">
        <title>Schizosaccharomyces pombe Ddb1 recruits substrate-specific adaptor proteins through a novel protein motif, the DDB-box.</title>
        <authorList>
            <person name="Fukumoto Y."/>
            <person name="Dohmae N."/>
            <person name="Hanaoka F."/>
        </authorList>
    </citation>
    <scope>FUNCTION</scope>
    <scope>INTERACTION WITH CKN1; IQW1 AND WDR21</scope>
</reference>
<proteinExistence type="evidence at protein level"/>
<name>DDB1_SCHPO</name>
<feature type="chain" id="PRO_0000079843" description="DNA damage-binding protein 1">
    <location>
        <begin position="1"/>
        <end position="1072"/>
    </location>
</feature>